<feature type="chain" id="PRO_0000130657" description="Large ribosomal subunit protein uL24">
    <location>
        <begin position="1"/>
        <end position="103"/>
    </location>
</feature>
<feature type="strand" evidence="3">
    <location>
        <begin position="8"/>
        <end position="11"/>
    </location>
</feature>
<feature type="strand" evidence="3">
    <location>
        <begin position="13"/>
        <end position="16"/>
    </location>
</feature>
<feature type="strand" evidence="3">
    <location>
        <begin position="20"/>
        <end position="27"/>
    </location>
</feature>
<feature type="turn" evidence="3">
    <location>
        <begin position="28"/>
        <end position="31"/>
    </location>
</feature>
<feature type="strand" evidence="3">
    <location>
        <begin position="32"/>
        <end position="35"/>
    </location>
</feature>
<feature type="strand" evidence="3">
    <location>
        <begin position="38"/>
        <end position="42"/>
    </location>
</feature>
<feature type="strand" evidence="3">
    <location>
        <begin position="58"/>
        <end position="60"/>
    </location>
</feature>
<feature type="helix" evidence="3">
    <location>
        <begin position="65"/>
        <end position="67"/>
    </location>
</feature>
<feature type="strand" evidence="3">
    <location>
        <begin position="68"/>
        <end position="71"/>
    </location>
</feature>
<feature type="turn" evidence="3">
    <location>
        <begin position="73"/>
        <end position="75"/>
    </location>
</feature>
<feature type="strand" evidence="3">
    <location>
        <begin position="81"/>
        <end position="83"/>
    </location>
</feature>
<feature type="strand" evidence="3">
    <location>
        <begin position="86"/>
        <end position="89"/>
    </location>
</feature>
<feature type="strand" evidence="3">
    <location>
        <begin position="92"/>
        <end position="97"/>
    </location>
</feature>
<comment type="function">
    <text evidence="1">One of two assembly initiator proteins, it binds directly to the 5'-end of the 23S rRNA, where it nucleates assembly of the 50S subunit.</text>
</comment>
<comment type="function">
    <text evidence="1">One of the proteins that surrounds the polypeptide exit tunnel on the outside of the subunit.</text>
</comment>
<comment type="subunit">
    <text evidence="1">Part of the 50S ribosomal subunit.</text>
</comment>
<comment type="similarity">
    <text evidence="1">Belongs to the universal ribosomal protein uL24 family.</text>
</comment>
<name>RL24_ENTFA</name>
<dbReference type="EMBL" id="AE016830">
    <property type="protein sequence ID" value="AAO80086.1"/>
    <property type="molecule type" value="Genomic_DNA"/>
</dbReference>
<dbReference type="RefSeq" id="NP_814015.1">
    <property type="nucleotide sequence ID" value="NC_004668.1"/>
</dbReference>
<dbReference type="RefSeq" id="WP_002356212.1">
    <property type="nucleotide sequence ID" value="NZ_KE136524.1"/>
</dbReference>
<dbReference type="PDB" id="6WU9">
    <property type="method" value="EM"/>
    <property type="resolution" value="2.90 A"/>
    <property type="chains" value="V=1-101"/>
</dbReference>
<dbReference type="PDB" id="7P7Q">
    <property type="method" value="EM"/>
    <property type="resolution" value="2.40 A"/>
    <property type="chains" value="X=1-103"/>
</dbReference>
<dbReference type="PDB" id="7P7R">
    <property type="method" value="EM"/>
    <property type="resolution" value="2.90 A"/>
    <property type="chains" value="X=1-103"/>
</dbReference>
<dbReference type="PDBsum" id="6WU9"/>
<dbReference type="PDBsum" id="7P7Q"/>
<dbReference type="PDBsum" id="7P7R"/>
<dbReference type="EMDB" id="EMD-13241"/>
<dbReference type="EMDB" id="EMD-13242"/>
<dbReference type="SMR" id="Q839F3"/>
<dbReference type="STRING" id="226185.EF_0217"/>
<dbReference type="EnsemblBacteria" id="AAO80086">
    <property type="protein sequence ID" value="AAO80086"/>
    <property type="gene ID" value="EF_0217"/>
</dbReference>
<dbReference type="GeneID" id="60892712"/>
<dbReference type="KEGG" id="efa:EF0217"/>
<dbReference type="PATRIC" id="fig|226185.45.peg.49"/>
<dbReference type="eggNOG" id="COG0198">
    <property type="taxonomic scope" value="Bacteria"/>
</dbReference>
<dbReference type="HOGENOM" id="CLU_093315_2_0_9"/>
<dbReference type="Proteomes" id="UP000001415">
    <property type="component" value="Chromosome"/>
</dbReference>
<dbReference type="GO" id="GO:1990904">
    <property type="term" value="C:ribonucleoprotein complex"/>
    <property type="evidence" value="ECO:0007669"/>
    <property type="project" value="UniProtKB-KW"/>
</dbReference>
<dbReference type="GO" id="GO:0005840">
    <property type="term" value="C:ribosome"/>
    <property type="evidence" value="ECO:0007669"/>
    <property type="project" value="UniProtKB-KW"/>
</dbReference>
<dbReference type="GO" id="GO:0019843">
    <property type="term" value="F:rRNA binding"/>
    <property type="evidence" value="ECO:0007669"/>
    <property type="project" value="UniProtKB-UniRule"/>
</dbReference>
<dbReference type="GO" id="GO:0003735">
    <property type="term" value="F:structural constituent of ribosome"/>
    <property type="evidence" value="ECO:0007669"/>
    <property type="project" value="InterPro"/>
</dbReference>
<dbReference type="GO" id="GO:0006412">
    <property type="term" value="P:translation"/>
    <property type="evidence" value="ECO:0007669"/>
    <property type="project" value="UniProtKB-UniRule"/>
</dbReference>
<dbReference type="CDD" id="cd06089">
    <property type="entry name" value="KOW_RPL26"/>
    <property type="match status" value="1"/>
</dbReference>
<dbReference type="FunFam" id="2.30.30.30:FF:000004">
    <property type="entry name" value="50S ribosomal protein L24"/>
    <property type="match status" value="1"/>
</dbReference>
<dbReference type="Gene3D" id="2.30.30.30">
    <property type="match status" value="1"/>
</dbReference>
<dbReference type="HAMAP" id="MF_01326_B">
    <property type="entry name" value="Ribosomal_uL24_B"/>
    <property type="match status" value="1"/>
</dbReference>
<dbReference type="InterPro" id="IPR005824">
    <property type="entry name" value="KOW"/>
</dbReference>
<dbReference type="InterPro" id="IPR014722">
    <property type="entry name" value="Rib_uL2_dom2"/>
</dbReference>
<dbReference type="InterPro" id="IPR003256">
    <property type="entry name" value="Ribosomal_uL24"/>
</dbReference>
<dbReference type="InterPro" id="IPR005825">
    <property type="entry name" value="Ribosomal_uL24_CS"/>
</dbReference>
<dbReference type="InterPro" id="IPR041988">
    <property type="entry name" value="Ribosomal_uL24_KOW"/>
</dbReference>
<dbReference type="InterPro" id="IPR008991">
    <property type="entry name" value="Translation_prot_SH3-like_sf"/>
</dbReference>
<dbReference type="NCBIfam" id="TIGR01079">
    <property type="entry name" value="rplX_bact"/>
    <property type="match status" value="1"/>
</dbReference>
<dbReference type="PANTHER" id="PTHR12903">
    <property type="entry name" value="MITOCHONDRIAL RIBOSOMAL PROTEIN L24"/>
    <property type="match status" value="1"/>
</dbReference>
<dbReference type="Pfam" id="PF00467">
    <property type="entry name" value="KOW"/>
    <property type="match status" value="1"/>
</dbReference>
<dbReference type="Pfam" id="PF17136">
    <property type="entry name" value="ribosomal_L24"/>
    <property type="match status" value="1"/>
</dbReference>
<dbReference type="SMART" id="SM00739">
    <property type="entry name" value="KOW"/>
    <property type="match status" value="1"/>
</dbReference>
<dbReference type="SUPFAM" id="SSF50104">
    <property type="entry name" value="Translation proteins SH3-like domain"/>
    <property type="match status" value="1"/>
</dbReference>
<dbReference type="PROSITE" id="PS01108">
    <property type="entry name" value="RIBOSOMAL_L24"/>
    <property type="match status" value="1"/>
</dbReference>
<sequence>MFVKKGDKVKVITGKDKNKEGVVLAAFPKQDKVIVEGVNVVKKHQKPNQAAPQGGILEVEAPIHVSNVMVIDPSNGEATKVAFKEVDGKKVRVSKKTGEVLDK</sequence>
<protein>
    <recommendedName>
        <fullName evidence="1">Large ribosomal subunit protein uL24</fullName>
    </recommendedName>
    <alternativeName>
        <fullName evidence="2">50S ribosomal protein L24</fullName>
    </alternativeName>
</protein>
<keyword id="KW-0002">3D-structure</keyword>
<keyword id="KW-1185">Reference proteome</keyword>
<keyword id="KW-0687">Ribonucleoprotein</keyword>
<keyword id="KW-0689">Ribosomal protein</keyword>
<keyword id="KW-0694">RNA-binding</keyword>
<keyword id="KW-0699">rRNA-binding</keyword>
<proteinExistence type="evidence at protein level"/>
<accession>Q839F3</accession>
<reference key="1">
    <citation type="journal article" date="2003" name="Science">
        <title>Role of mobile DNA in the evolution of vancomycin-resistant Enterococcus faecalis.</title>
        <authorList>
            <person name="Paulsen I.T."/>
            <person name="Banerjei L."/>
            <person name="Myers G.S.A."/>
            <person name="Nelson K.E."/>
            <person name="Seshadri R."/>
            <person name="Read T.D."/>
            <person name="Fouts D.E."/>
            <person name="Eisen J.A."/>
            <person name="Gill S.R."/>
            <person name="Heidelberg J.F."/>
            <person name="Tettelin H."/>
            <person name="Dodson R.J."/>
            <person name="Umayam L.A."/>
            <person name="Brinkac L.M."/>
            <person name="Beanan M.J."/>
            <person name="Daugherty S.C."/>
            <person name="DeBoy R.T."/>
            <person name="Durkin S.A."/>
            <person name="Kolonay J.F."/>
            <person name="Madupu R."/>
            <person name="Nelson W.C."/>
            <person name="Vamathevan J.J."/>
            <person name="Tran B."/>
            <person name="Upton J."/>
            <person name="Hansen T."/>
            <person name="Shetty J."/>
            <person name="Khouri H.M."/>
            <person name="Utterback T.R."/>
            <person name="Radune D."/>
            <person name="Ketchum K.A."/>
            <person name="Dougherty B.A."/>
            <person name="Fraser C.M."/>
        </authorList>
    </citation>
    <scope>NUCLEOTIDE SEQUENCE [LARGE SCALE GENOMIC DNA]</scope>
    <source>
        <strain>ATCC 700802 / V583</strain>
    </source>
</reference>
<evidence type="ECO:0000255" key="1">
    <source>
        <dbReference type="HAMAP-Rule" id="MF_01326"/>
    </source>
</evidence>
<evidence type="ECO:0000305" key="2"/>
<evidence type="ECO:0007829" key="3">
    <source>
        <dbReference type="PDB" id="6WU9"/>
    </source>
</evidence>
<gene>
    <name evidence="1" type="primary">rplX</name>
    <name type="ordered locus">EF_0217</name>
</gene>
<organism>
    <name type="scientific">Enterococcus faecalis (strain ATCC 700802 / V583)</name>
    <dbReference type="NCBI Taxonomy" id="226185"/>
    <lineage>
        <taxon>Bacteria</taxon>
        <taxon>Bacillati</taxon>
        <taxon>Bacillota</taxon>
        <taxon>Bacilli</taxon>
        <taxon>Lactobacillales</taxon>
        <taxon>Enterococcaceae</taxon>
        <taxon>Enterococcus</taxon>
    </lineage>
</organism>